<organism>
    <name type="scientific">BK polyomavirus</name>
    <name type="common">BKPyV</name>
    <name type="synonym">Human polyomavirus 1</name>
    <dbReference type="NCBI Taxonomy" id="1891762"/>
    <lineage>
        <taxon>Viruses</taxon>
        <taxon>Monodnaviria</taxon>
        <taxon>Shotokuvirae</taxon>
        <taxon>Cossaviricota</taxon>
        <taxon>Papovaviricetes</taxon>
        <taxon>Sepolyvirales</taxon>
        <taxon>Polyomaviridae</taxon>
        <taxon>Betapolyomavirus</taxon>
    </lineage>
</organism>
<name>LT_POVBK</name>
<evidence type="ECO:0000250" key="1"/>
<evidence type="ECO:0000250" key="2">
    <source>
        <dbReference type="UniProtKB" id="P03070"/>
    </source>
</evidence>
<evidence type="ECO:0000255" key="3">
    <source>
        <dbReference type="PROSITE-ProRule" id="PRU00286"/>
    </source>
</evidence>
<evidence type="ECO:0000255" key="4">
    <source>
        <dbReference type="PROSITE-ProRule" id="PRU00551"/>
    </source>
</evidence>
<evidence type="ECO:0000255" key="5">
    <source>
        <dbReference type="PROSITE-ProRule" id="PRU00620"/>
    </source>
</evidence>
<evidence type="ECO:0000255" key="6">
    <source>
        <dbReference type="PROSITE-ProRule" id="PRU00671"/>
    </source>
</evidence>
<evidence type="ECO:0000256" key="7">
    <source>
        <dbReference type="SAM" id="MobiDB-lite"/>
    </source>
</evidence>
<evidence type="ECO:0000305" key="8"/>
<keyword id="KW-0007">Acetylation</keyword>
<keyword id="KW-0010">Activator</keyword>
<keyword id="KW-0025">Alternative splicing</keyword>
<keyword id="KW-0067">ATP-binding</keyword>
<keyword id="KW-0235">DNA replication</keyword>
<keyword id="KW-0238">DNA-binding</keyword>
<keyword id="KW-0244">Early protein</keyword>
<keyword id="KW-1078">G1/S host cell cycle checkpoint dysregulation by virus</keyword>
<keyword id="KW-0325">Glycoprotein</keyword>
<keyword id="KW-0347">Helicase</keyword>
<keyword id="KW-1048">Host nucleus</keyword>
<keyword id="KW-0945">Host-virus interaction</keyword>
<keyword id="KW-0378">Hydrolase</keyword>
<keyword id="KW-1090">Inhibition of host innate immune response by virus</keyword>
<keyword id="KW-1114">Inhibition of host interferon signaling pathway by virus</keyword>
<keyword id="KW-1096">Inhibition of host JAK1 by virus</keyword>
<keyword id="KW-0922">Interferon antiviral system evasion</keyword>
<keyword id="KW-0413">Isomerase</keyword>
<keyword id="KW-0460">Magnesium</keyword>
<keyword id="KW-0479">Metal-binding</keyword>
<keyword id="KW-1121">Modulation of host cell cycle by virus</keyword>
<keyword id="KW-0547">Nucleotide-binding</keyword>
<keyword id="KW-0553">Oncogene</keyword>
<keyword id="KW-0597">Phosphoprotein</keyword>
<keyword id="KW-0804">Transcription</keyword>
<keyword id="KW-0805">Transcription regulation</keyword>
<keyword id="KW-0899">Viral immunoevasion</keyword>
<keyword id="KW-0862">Zinc</keyword>
<keyword id="KW-0863">Zinc-finger</keyword>
<protein>
    <recommendedName>
        <fullName>Large T antigen</fullName>
        <shortName>LT</shortName>
        <shortName>LT-AG</shortName>
        <ecNumber evidence="2">5.6.2.4</ecNumber>
    </recommendedName>
    <alternativeName>
        <fullName evidence="8">DNA 3'-5' helicase large T antigen</fullName>
    </alternativeName>
</protein>
<organismHost>
    <name type="scientific">Homo sapiens</name>
    <name type="common">Human</name>
    <dbReference type="NCBI Taxonomy" id="9606"/>
</organismHost>
<dbReference type="EC" id="5.6.2.4" evidence="2"/>
<dbReference type="EMBL" id="V01108">
    <property type="protein sequence ID" value="CAA24300.1"/>
    <property type="molecule type" value="Genomic_DNA"/>
</dbReference>
<dbReference type="EMBL" id="V01109">
    <property type="protein sequence ID" value="CAA24302.1"/>
    <property type="molecule type" value="Genomic_DNA"/>
</dbReference>
<dbReference type="PIR" id="C03632">
    <property type="entry name" value="TVVPTB"/>
</dbReference>
<dbReference type="RefSeq" id="YP_717940.1">
    <molecule id="P03071-1"/>
    <property type="nucleotide sequence ID" value="NC_001538.1"/>
</dbReference>
<dbReference type="SMR" id="P03071"/>
<dbReference type="GeneID" id="29031009"/>
<dbReference type="KEGG" id="vg:29031009"/>
<dbReference type="OrthoDB" id="14669at10239"/>
<dbReference type="Proteomes" id="UP000008475">
    <property type="component" value="Genome"/>
</dbReference>
<dbReference type="Proteomes" id="UP000008990">
    <property type="component" value="Genome"/>
</dbReference>
<dbReference type="GO" id="GO:0042025">
    <property type="term" value="C:host cell nucleus"/>
    <property type="evidence" value="ECO:0007669"/>
    <property type="project" value="UniProtKB-SubCell"/>
</dbReference>
<dbReference type="GO" id="GO:0005524">
    <property type="term" value="F:ATP binding"/>
    <property type="evidence" value="ECO:0007669"/>
    <property type="project" value="UniProtKB-KW"/>
</dbReference>
<dbReference type="GO" id="GO:0016887">
    <property type="term" value="F:ATP hydrolysis activity"/>
    <property type="evidence" value="ECO:0007669"/>
    <property type="project" value="RHEA"/>
</dbReference>
<dbReference type="GO" id="GO:0003688">
    <property type="term" value="F:DNA replication origin binding"/>
    <property type="evidence" value="ECO:0007669"/>
    <property type="project" value="InterPro"/>
</dbReference>
<dbReference type="GO" id="GO:0004386">
    <property type="term" value="F:helicase activity"/>
    <property type="evidence" value="ECO:0007669"/>
    <property type="project" value="UniProtKB-KW"/>
</dbReference>
<dbReference type="GO" id="GO:0008270">
    <property type="term" value="F:zinc ion binding"/>
    <property type="evidence" value="ECO:0007669"/>
    <property type="project" value="UniProtKB-KW"/>
</dbReference>
<dbReference type="GO" id="GO:0006260">
    <property type="term" value="P:DNA replication"/>
    <property type="evidence" value="ECO:0007669"/>
    <property type="project" value="UniProtKB-KW"/>
</dbReference>
<dbReference type="GO" id="GO:0039645">
    <property type="term" value="P:symbiont-mediated perturbation of host cell cycle G1/S transition checkpoint"/>
    <property type="evidence" value="ECO:0007669"/>
    <property type="project" value="UniProtKB-KW"/>
</dbReference>
<dbReference type="GO" id="GO:0052170">
    <property type="term" value="P:symbiont-mediated suppression of host innate immune response"/>
    <property type="evidence" value="ECO:0007669"/>
    <property type="project" value="UniProtKB-KW"/>
</dbReference>
<dbReference type="GO" id="GO:0039576">
    <property type="term" value="P:symbiont-mediated suppression of host JAK-STAT cascade via inhibition of JAK1 activity"/>
    <property type="evidence" value="ECO:0007669"/>
    <property type="project" value="UniProtKB-KW"/>
</dbReference>
<dbReference type="GO" id="GO:0039502">
    <property type="term" value="P:symbiont-mediated suppression of host type I interferon-mediated signaling pathway"/>
    <property type="evidence" value="ECO:0007669"/>
    <property type="project" value="UniProtKB-KW"/>
</dbReference>
<dbReference type="CDD" id="cd06257">
    <property type="entry name" value="DnaJ"/>
    <property type="match status" value="1"/>
</dbReference>
<dbReference type="FunFam" id="1.10.287.110:FF:000161">
    <property type="entry name" value="Small t antigen"/>
    <property type="match status" value="1"/>
</dbReference>
<dbReference type="Gene3D" id="3.40.1310.20">
    <property type="match status" value="1"/>
</dbReference>
<dbReference type="Gene3D" id="1.10.287.110">
    <property type="entry name" value="DnaJ domain"/>
    <property type="match status" value="1"/>
</dbReference>
<dbReference type="Gene3D" id="1.20.1050.70">
    <property type="entry name" value="Large T antigen, SV40, domain 3"/>
    <property type="match status" value="1"/>
</dbReference>
<dbReference type="Gene3D" id="3.40.50.300">
    <property type="entry name" value="P-loop containing nucleotide triphosphate hydrolases"/>
    <property type="match status" value="1"/>
</dbReference>
<dbReference type="Gene3D" id="1.10.10.510">
    <property type="entry name" value="Zinc finger, large T-antigen D1 domain"/>
    <property type="match status" value="1"/>
</dbReference>
<dbReference type="InterPro" id="IPR001623">
    <property type="entry name" value="DnaJ_domain"/>
</dbReference>
<dbReference type="InterPro" id="IPR014015">
    <property type="entry name" value="Helicase_SF3_DNA-vir"/>
</dbReference>
<dbReference type="InterPro" id="IPR036869">
    <property type="entry name" value="J_dom_sf"/>
</dbReference>
<dbReference type="InterPro" id="IPR016392">
    <property type="entry name" value="Lg_T_Ag_polyomavir"/>
</dbReference>
<dbReference type="InterPro" id="IPR010932">
    <property type="entry name" value="Lg_T_Ag_Polyomavir_C"/>
</dbReference>
<dbReference type="InterPro" id="IPR027417">
    <property type="entry name" value="P-loop_NTPase"/>
</dbReference>
<dbReference type="InterPro" id="IPR003133">
    <property type="entry name" value="T_Ag_DNA-bd"/>
</dbReference>
<dbReference type="InterPro" id="IPR017910">
    <property type="entry name" value="Znf_lg_T-Ag_D1-typ"/>
</dbReference>
<dbReference type="InterPro" id="IPR037102">
    <property type="entry name" value="Znf_lg_T-Ag_D1_dom_sf"/>
</dbReference>
<dbReference type="Pfam" id="PF06431">
    <property type="entry name" value="Polyoma_lg_T_C"/>
    <property type="match status" value="1"/>
</dbReference>
<dbReference type="Pfam" id="PF02217">
    <property type="entry name" value="T_Ag_DNA_bind"/>
    <property type="match status" value="1"/>
</dbReference>
<dbReference type="PIRSF" id="PIRSF003368">
    <property type="entry name" value="Large_T_antigen_polyomaV"/>
    <property type="match status" value="1"/>
</dbReference>
<dbReference type="SMART" id="SM00271">
    <property type="entry name" value="DnaJ"/>
    <property type="match status" value="1"/>
</dbReference>
<dbReference type="SUPFAM" id="SSF46565">
    <property type="entry name" value="Chaperone J-domain"/>
    <property type="match status" value="1"/>
</dbReference>
<dbReference type="SUPFAM" id="SSF55464">
    <property type="entry name" value="Origin of replication-binding domain, RBD-like"/>
    <property type="match status" value="1"/>
</dbReference>
<dbReference type="SUPFAM" id="SSF52540">
    <property type="entry name" value="P-loop containing nucleoside triphosphate hydrolases"/>
    <property type="match status" value="1"/>
</dbReference>
<dbReference type="PROSITE" id="PS50076">
    <property type="entry name" value="DNAJ_2"/>
    <property type="match status" value="1"/>
</dbReference>
<dbReference type="PROSITE" id="PS51206">
    <property type="entry name" value="SF3_HELICASE_1"/>
    <property type="match status" value="1"/>
</dbReference>
<dbReference type="PROSITE" id="PS51287">
    <property type="entry name" value="T_AG_OBD"/>
    <property type="match status" value="1"/>
</dbReference>
<dbReference type="PROSITE" id="PS51341">
    <property type="entry name" value="ZF_LTAG_D1"/>
    <property type="match status" value="1"/>
</dbReference>
<comment type="function">
    <text evidence="2">Isoform large T antigen is a key early protein essential for both driving viral replication and inducing cellular transformation. Plays a role in viral genome replication by driving entry of quiescent cells into the cell cycle and by autoregulating the synthesis of viral early mRNA. Displays highly oncogenic activities by corrupting the host cellular checkpoint mechanisms that guard cell division and the transcription, replication, and repair of DNA. Participates in the modulation of cellular gene expression preceeding viral DNA replication. This step involves binding to host key cell cycle regulators retinoblastoma protein RB1/pRb and TP53. Induces the disassembly of host E2F1 transcription factors from RB1, thus promoting transcriptional activation of E2F1-regulated S-phase genes. Inhibits host TP53 binding to DNA, abrogating the ability of TP53 to stimulate gene expression. Plays the role of a TFIID-associated factor (TAF) in transcription initiation for all three RNA polymerases, by stabilizing the TBP-TFIIA complex on promoters. Initiates viral DNA replication and unwinding via interactions with the viral origin of replication. Binds two adjacent sites in the SV40 origin. The replication fork movement is facilitated by Large T antigen helicase activity. Has processive 3'-5' DNA helicase activity which requires a short 3' single-stranded region and ATP. Activates the transcription of viral late mRNA, through host TBP and TFIIA stabilization. Interferes with histone deacetylation mediated by HDAC1, leading to activation of transcription (By similarity).</text>
</comment>
<comment type="catalytic activity">
    <reaction evidence="2">
        <text>Couples ATP hydrolysis with the unwinding of duplex DNA by translocating in the 3'-5' direction.</text>
        <dbReference type="EC" id="5.6.2.4"/>
    </reaction>
</comment>
<comment type="catalytic activity">
    <reaction evidence="2">
        <text>ATP + H2O = ADP + phosphate + H(+)</text>
        <dbReference type="Rhea" id="RHEA:13065"/>
        <dbReference type="ChEBI" id="CHEBI:15377"/>
        <dbReference type="ChEBI" id="CHEBI:15378"/>
        <dbReference type="ChEBI" id="CHEBI:30616"/>
        <dbReference type="ChEBI" id="CHEBI:43474"/>
        <dbReference type="ChEBI" id="CHEBI:456216"/>
        <dbReference type="EC" id="5.6.2.4"/>
    </reaction>
</comment>
<comment type="cofactor">
    <cofactor evidence="2">
        <name>Mg(2+)</name>
        <dbReference type="ChEBI" id="CHEBI:18420"/>
    </cofactor>
    <text evidence="2">DNA helicase activity requires Mg(2+).</text>
</comment>
<comment type="subunit">
    <text evidence="1">Forms homohexamers in the presence of ATP. Interacts with host HDAC1. Interacts (via LXCXE domain) with host RB1; the interaction induces the aberrant dissociation of RB1-E2F1 complex thereby disrupting RB1's activity. Interacts (via LXCXE domain) with host pRB-related proteins RBL1 and RBL2. Interacts (via C-terminus) with host TOP1 and POLA1 allowing DNA replication. Interacts with host TP53, inhibiting TP53 binding to DNA. Interacts with host preinitiation complex components TBP, TFIIA and TFIID to regulate transcription initiation (By similarity).</text>
</comment>
<comment type="subcellular location">
    <subcellularLocation>
        <location evidence="1">Host nucleus</location>
    </subcellularLocation>
</comment>
<comment type="alternative products">
    <event type="alternative splicing"/>
    <isoform>
        <id>P03071-1</id>
        <name>Large T antigen</name>
        <sequence type="displayed"/>
    </isoform>
    <isoform>
        <id>P03082-1</id>
        <name>Small t antigen</name>
        <sequence type="external"/>
    </isoform>
</comment>
<comment type="domain">
    <text evidence="1">The J domain is essential for multiple viral activities, including virion assembly, viral DNA replication, transformation and transcriptional activation.</text>
</comment>
<comment type="domain">
    <text evidence="1">The LXCXE motif specifically binds to host pRB, RBL1, and RBL2.</text>
</comment>
<comment type="domain">
    <text evidence="1">The zinc finger region contributes to protein-protein interactions essential for the assembly of stable T-antigen hexamers at the origin of replication. The hexamers are required for subsequent alterations in the structure of origin DNA (By similarity).</text>
</comment>
<comment type="domain">
    <text evidence="1">The ATP binding/ATPase domain is required for proper hexamer assembly and helicase activity.</text>
</comment>
<comment type="PTM">
    <text evidence="1">Phosphorylated on both serine and threonine residues. Small t antigen inhibits the dephosphorylation by the AC form of PP2A (By similarity).</text>
</comment>
<comment type="PTM">
    <text evidence="1">O-Glycosylated near the C-terminal region.</text>
</comment>
<comment type="PTM">
    <text evidence="1">Acetylated by CBP in a TP53-dependent manner.</text>
</comment>
<accession>P03071</accession>
<feature type="chain" id="PRO_0000115037" description="Large T antigen">
    <location>
        <begin position="1"/>
        <end position="695"/>
    </location>
</feature>
<feature type="domain" description="J" evidence="3">
    <location>
        <begin position="12"/>
        <end position="75"/>
    </location>
</feature>
<feature type="domain" description="SF3 helicase" evidence="4">
    <location>
        <begin position="402"/>
        <end position="562"/>
    </location>
</feature>
<feature type="DNA-binding region" description="T-ag OBD" evidence="5">
    <location>
        <begin position="141"/>
        <end position="256"/>
    </location>
</feature>
<feature type="zinc finger region" description="T-ag D1-type" evidence="6">
    <location>
        <begin position="267"/>
        <end position="359"/>
    </location>
</feature>
<feature type="region of interest" description="Binding to host RB1 protein and transforming activity" evidence="1">
    <location>
        <begin position="105"/>
        <end position="109"/>
    </location>
</feature>
<feature type="region of interest" description="Disordered" evidence="7">
    <location>
        <begin position="117"/>
        <end position="138"/>
    </location>
</feature>
<feature type="region of interest" description="Disordered" evidence="7">
    <location>
        <begin position="634"/>
        <end position="695"/>
    </location>
</feature>
<feature type="short sequence motif" description="Nuclear localization signal" evidence="1">
    <location>
        <begin position="127"/>
        <end position="134"/>
    </location>
</feature>
<feature type="compositionally biased region" description="Low complexity" evidence="7">
    <location>
        <begin position="645"/>
        <end position="661"/>
    </location>
</feature>
<feature type="compositionally biased region" description="Basic and acidic residues" evidence="7">
    <location>
        <begin position="666"/>
        <end position="679"/>
    </location>
</feature>
<feature type="binding site" evidence="6">
    <location>
        <position position="304"/>
    </location>
    <ligand>
        <name>Zn(2+)</name>
        <dbReference type="ChEBI" id="CHEBI:29105"/>
    </ligand>
</feature>
<feature type="binding site" evidence="6">
    <location>
        <position position="307"/>
    </location>
    <ligand>
        <name>Zn(2+)</name>
        <dbReference type="ChEBI" id="CHEBI:29105"/>
    </ligand>
</feature>
<feature type="binding site" evidence="6">
    <location>
        <position position="315"/>
    </location>
    <ligand>
        <name>Zn(2+)</name>
        <dbReference type="ChEBI" id="CHEBI:29105"/>
    </ligand>
</feature>
<feature type="binding site" evidence="6">
    <location>
        <position position="319"/>
    </location>
    <ligand>
        <name>Zn(2+)</name>
        <dbReference type="ChEBI" id="CHEBI:29105"/>
    </ligand>
</feature>
<feature type="binding site" evidence="4">
    <location>
        <begin position="428"/>
        <end position="435"/>
    </location>
    <ligand>
        <name>ATP</name>
        <dbReference type="ChEBI" id="CHEBI:30616"/>
    </ligand>
</feature>
<feature type="modified residue" description="N-acetylmethionine; by host" evidence="1">
    <location>
        <position position="1"/>
    </location>
</feature>
<feature type="modified residue" description="Phosphoserine; by host" evidence="1">
    <location>
        <position position="114"/>
    </location>
</feature>
<feature type="modified residue" description="Phosphoserine; by host" evidence="1">
    <location>
        <position position="122"/>
    </location>
</feature>
<feature type="modified residue" description="Phosphoserine; by host" evidence="1">
    <location>
        <position position="125"/>
    </location>
</feature>
<feature type="modified residue" description="Phosphothreonine; by host" evidence="1">
    <location>
        <position position="126"/>
    </location>
</feature>
<feature type="modified residue" description="N6-acetyllysine; by host" evidence="1">
    <location>
        <position position="687"/>
    </location>
</feature>
<feature type="modified residue" description="Phosphothreonine; by host" evidence="1">
    <location>
        <position position="691"/>
    </location>
</feature>
<feature type="sequence variant" description="In strain: MM.">
    <location>
        <position position="34"/>
    </location>
</feature>
<feature type="sequence variant" description="In strain: MM.">
    <original>S</original>
    <variation>N</variation>
    <location>
        <position position="260"/>
    </location>
</feature>
<feature type="sequence variant" description="In strain: MM.">
    <original>Q</original>
    <variation>K</variation>
    <location>
        <position position="335"/>
    </location>
</feature>
<feature type="sequence variant" description="In strain: MM.">
    <original>S</original>
    <variation>V</variation>
    <location>
        <position position="337"/>
    </location>
</feature>
<feature type="sequence variant" description="In strain: MM.">
    <original>G</original>
    <variation>R</variation>
    <location>
        <position position="446"/>
    </location>
</feature>
<proteinExistence type="inferred from homology"/>
<reference key="1">
    <citation type="journal article" date="1979" name="Cell">
        <title>The genome of human papovavirus BKV.</title>
        <authorList>
            <person name="Seif I."/>
            <person name="Khoury G."/>
            <person name="Dhar R."/>
        </authorList>
    </citation>
    <scope>NUCLEOTIDE SEQUENCE [GENOMIC DNA]</scope>
    <source>
        <strain>Dunlop</strain>
    </source>
</reference>
<reference key="2">
    <citation type="journal article" date="1979" name="Science">
        <title>BK virus DNA: complete nucleotide sequence of a human tumor virus.</title>
        <authorList>
            <person name="Yang R.C.A."/>
            <person name="Wu R."/>
        </authorList>
    </citation>
    <scope>NUCLEOTIDE SEQUENCE [GENOMIC DNA]</scope>
    <source>
        <strain>MM</strain>
    </source>
</reference>
<reference key="3">
    <citation type="journal article" date="1980" name="J. Virol.">
        <title>BK virus DNA sequence coding for the t and T antigens and evaluation of methods for determining sequence homology.</title>
        <authorList>
            <person name="Yang R.C.A."/>
            <person name="Young A."/>
            <person name="Wu R."/>
        </authorList>
    </citation>
    <scope>NUCLEOTIDE SEQUENCE [GENOMIC DNA]</scope>
    <source>
        <strain>MM</strain>
    </source>
</reference>
<sequence length="695" mass="80505">MDKVLNREESMELMDLLGLERAAWGNLPLMRKAYLRKCKEFHPDKGGDEDKMKRMNTLYKKMEQDVKVAHQPDFGTWSSSEVPTYGTEEWESWWSSFNEKWDEDLFCHEDMFASDEEATADSQHSTPPKKKRKVEDPKDFPSDLHQFLSQAVFSNRTLACFAVYTTKEKAQILYKKLMEKYSVTFISRHMCAGHNIIFFLTPHRHRVSAINNFCQKLCTFSFLICKGVNKEYLLYSALTRDPYHTIEESIQGGLKEHDFSPEEPEETKQVSWKLITEYAVETKCEDVFLLLGMYLEFQYNVEECKKCQKKDQPYHFKYHEKHFANAIIFAESKNQKSICQQAVDTVLAKKRVDTLHMTREEMLTERFNHILDKMDLIFGAHGNAVLEQYMAGVAWLHCLLPKMDSVIFDFLHCIVFNVPKRRYWLFKGPIDSGKTTLAAGLLDLCGGKALNVNLPMERLTFELGVAIDQYMVVFEDVKGTGAESKDLPSGHGINNLDSLRDYLDGSVKVNLEKKHLNKRTQIFPPGLVTMNEYPVPKTLQARFVRQIDFRPKIYLRKSLQNSEFLLEKRILQSGMTLLLLLIWFRPVADFATDIQSRIVEWKERLDSEISMYTFSRMKYNICMGKCILDITREEDSETEDSGHGSSTESQSQCSSQVSDTSAPAEDSQRSDPHSQELHLCKGFQCFKRPKTPPPK</sequence>